<accession>B7NDX8</accession>
<name>CYSG_ECOLU</name>
<protein>
    <recommendedName>
        <fullName evidence="1">Siroheme synthase</fullName>
    </recommendedName>
    <domain>
        <recommendedName>
            <fullName evidence="1">Uroporphyrinogen-III C-methyltransferase</fullName>
            <shortName evidence="1">Urogen III methylase</shortName>
            <ecNumber evidence="1">2.1.1.107</ecNumber>
        </recommendedName>
        <alternativeName>
            <fullName evidence="1">SUMT</fullName>
        </alternativeName>
        <alternativeName>
            <fullName evidence="1">Uroporphyrinogen III methylase</fullName>
            <shortName evidence="1">UROM</shortName>
        </alternativeName>
    </domain>
    <domain>
        <recommendedName>
            <fullName evidence="1">Precorrin-2 dehydrogenase</fullName>
            <ecNumber evidence="1">1.3.1.76</ecNumber>
        </recommendedName>
    </domain>
    <domain>
        <recommendedName>
            <fullName evidence="1">Sirohydrochlorin ferrochelatase</fullName>
            <ecNumber evidence="1">4.99.1.4</ecNumber>
        </recommendedName>
    </domain>
</protein>
<keyword id="KW-0169">Cobalamin biosynthesis</keyword>
<keyword id="KW-0456">Lyase</keyword>
<keyword id="KW-0489">Methyltransferase</keyword>
<keyword id="KW-0511">Multifunctional enzyme</keyword>
<keyword id="KW-0520">NAD</keyword>
<keyword id="KW-0560">Oxidoreductase</keyword>
<keyword id="KW-0597">Phosphoprotein</keyword>
<keyword id="KW-0627">Porphyrin biosynthesis</keyword>
<keyword id="KW-0949">S-adenosyl-L-methionine</keyword>
<keyword id="KW-0808">Transferase</keyword>
<sequence>MDHLPIFCQLRDRDCLIVGGGDVAERKARLLLDAGARLTVNALAFIPQFTAWADAGMLTLVEGPFDESLLDTCWLAIAATDDDALNQRVSEAAEAHRIFCNVVDAPKAASFIMPSIIDRSPLMVAVSSGGTSPVLARLLREKLESLLPLHLGQVAKYAGQLRGRVKQQFATMGERRRFWEKLFVNDRLAQSLANNDQKAITETTEQLINEPLDHRGEVVLVGAGPGDAGLLTLKGLQQIQQADVVVYDRLVSDDIMNLVRRDADRVFVGKRAGYHCVPQEEINQILLREAQKGKRVVRLKGGDPFIFGRGGEELETLCNAGIPFSVVPGITAASGCSAYSGIPLTHRDYAQSVRLITGHLKTGGELDWENLAAEKQTLVFYMGLNQAATIQQKLIEHGMPGEMPVAIVENGTAVTQRVIDGTLTQLGELAQQMNSPSLIIIGRVVGLRDKLNWFSNH</sequence>
<dbReference type="EC" id="2.1.1.107" evidence="1"/>
<dbReference type="EC" id="1.3.1.76" evidence="1"/>
<dbReference type="EC" id="4.99.1.4" evidence="1"/>
<dbReference type="EMBL" id="CU928163">
    <property type="protein sequence ID" value="CAR14978.1"/>
    <property type="molecule type" value="Genomic_DNA"/>
</dbReference>
<dbReference type="RefSeq" id="WP_000349845.1">
    <property type="nucleotide sequence ID" value="NC_011751.1"/>
</dbReference>
<dbReference type="RefSeq" id="YP_002414483.1">
    <property type="nucleotide sequence ID" value="NC_011751.1"/>
</dbReference>
<dbReference type="SMR" id="B7NDX8"/>
<dbReference type="STRING" id="585056.ECUMN_3831"/>
<dbReference type="KEGG" id="eum:ECUMN_3831"/>
<dbReference type="PATRIC" id="fig|585056.7.peg.4003"/>
<dbReference type="HOGENOM" id="CLU_011276_2_0_6"/>
<dbReference type="UniPathway" id="UPA00148">
    <property type="reaction ID" value="UER00211"/>
</dbReference>
<dbReference type="UniPathway" id="UPA00148">
    <property type="reaction ID" value="UER00222"/>
</dbReference>
<dbReference type="UniPathway" id="UPA00262">
    <property type="reaction ID" value="UER00211"/>
</dbReference>
<dbReference type="UniPathway" id="UPA00262">
    <property type="reaction ID" value="UER00222"/>
</dbReference>
<dbReference type="UniPathway" id="UPA00262">
    <property type="reaction ID" value="UER00376"/>
</dbReference>
<dbReference type="Proteomes" id="UP000007097">
    <property type="component" value="Chromosome"/>
</dbReference>
<dbReference type="GO" id="GO:0051287">
    <property type="term" value="F:NAD binding"/>
    <property type="evidence" value="ECO:0007669"/>
    <property type="project" value="InterPro"/>
</dbReference>
<dbReference type="GO" id="GO:0043115">
    <property type="term" value="F:precorrin-2 dehydrogenase activity"/>
    <property type="evidence" value="ECO:0007669"/>
    <property type="project" value="UniProtKB-UniRule"/>
</dbReference>
<dbReference type="GO" id="GO:0051266">
    <property type="term" value="F:sirohydrochlorin ferrochelatase activity"/>
    <property type="evidence" value="ECO:0007669"/>
    <property type="project" value="UniProtKB-EC"/>
</dbReference>
<dbReference type="GO" id="GO:0004851">
    <property type="term" value="F:uroporphyrin-III C-methyltransferase activity"/>
    <property type="evidence" value="ECO:0007669"/>
    <property type="project" value="UniProtKB-UniRule"/>
</dbReference>
<dbReference type="GO" id="GO:0009236">
    <property type="term" value="P:cobalamin biosynthetic process"/>
    <property type="evidence" value="ECO:0007669"/>
    <property type="project" value="UniProtKB-UniRule"/>
</dbReference>
<dbReference type="GO" id="GO:0032259">
    <property type="term" value="P:methylation"/>
    <property type="evidence" value="ECO:0007669"/>
    <property type="project" value="UniProtKB-KW"/>
</dbReference>
<dbReference type="GO" id="GO:0019354">
    <property type="term" value="P:siroheme biosynthetic process"/>
    <property type="evidence" value="ECO:0007669"/>
    <property type="project" value="UniProtKB-UniRule"/>
</dbReference>
<dbReference type="CDD" id="cd11642">
    <property type="entry name" value="SUMT"/>
    <property type="match status" value="1"/>
</dbReference>
<dbReference type="FunFam" id="1.10.8.210:FF:000001">
    <property type="entry name" value="Siroheme synthase"/>
    <property type="match status" value="1"/>
</dbReference>
<dbReference type="FunFam" id="3.30.160.110:FF:000001">
    <property type="entry name" value="Siroheme synthase"/>
    <property type="match status" value="1"/>
</dbReference>
<dbReference type="FunFam" id="3.30.950.10:FF:000001">
    <property type="entry name" value="Siroheme synthase"/>
    <property type="match status" value="1"/>
</dbReference>
<dbReference type="FunFam" id="3.40.1010.10:FF:000001">
    <property type="entry name" value="Siroheme synthase"/>
    <property type="match status" value="1"/>
</dbReference>
<dbReference type="FunFam" id="3.40.50.720:FF:000092">
    <property type="entry name" value="Siroheme synthase"/>
    <property type="match status" value="1"/>
</dbReference>
<dbReference type="Gene3D" id="3.40.1010.10">
    <property type="entry name" value="Cobalt-precorrin-4 Transmethylase, Domain 1"/>
    <property type="match status" value="1"/>
</dbReference>
<dbReference type="Gene3D" id="3.30.950.10">
    <property type="entry name" value="Methyltransferase, Cobalt-precorrin-4 Transmethylase, Domain 2"/>
    <property type="match status" value="1"/>
</dbReference>
<dbReference type="Gene3D" id="3.40.50.720">
    <property type="entry name" value="NAD(P)-binding Rossmann-like Domain"/>
    <property type="match status" value="1"/>
</dbReference>
<dbReference type="Gene3D" id="1.10.8.210">
    <property type="entry name" value="Sirohaem synthase, dimerisation domain"/>
    <property type="match status" value="1"/>
</dbReference>
<dbReference type="Gene3D" id="3.30.160.110">
    <property type="entry name" value="Siroheme synthase, domain 2"/>
    <property type="match status" value="1"/>
</dbReference>
<dbReference type="HAMAP" id="MF_01646">
    <property type="entry name" value="Siroheme_synth"/>
    <property type="match status" value="1"/>
</dbReference>
<dbReference type="InterPro" id="IPR000878">
    <property type="entry name" value="4pyrrol_Mease"/>
</dbReference>
<dbReference type="InterPro" id="IPR035996">
    <property type="entry name" value="4pyrrol_Methylase_sf"/>
</dbReference>
<dbReference type="InterPro" id="IPR014777">
    <property type="entry name" value="4pyrrole_Mease_sub1"/>
</dbReference>
<dbReference type="InterPro" id="IPR014776">
    <property type="entry name" value="4pyrrole_Mease_sub2"/>
</dbReference>
<dbReference type="InterPro" id="IPR006366">
    <property type="entry name" value="CobA/CysG_C"/>
</dbReference>
<dbReference type="InterPro" id="IPR036291">
    <property type="entry name" value="NAD(P)-bd_dom_sf"/>
</dbReference>
<dbReference type="InterPro" id="IPR050161">
    <property type="entry name" value="Siro_Cobalamin_biosynth"/>
</dbReference>
<dbReference type="InterPro" id="IPR037115">
    <property type="entry name" value="Sirohaem_synt_dimer_dom_sf"/>
</dbReference>
<dbReference type="InterPro" id="IPR012409">
    <property type="entry name" value="Sirohaem_synth"/>
</dbReference>
<dbReference type="InterPro" id="IPR028281">
    <property type="entry name" value="Sirohaem_synthase_central"/>
</dbReference>
<dbReference type="InterPro" id="IPR019478">
    <property type="entry name" value="Sirohaem_synthase_dimer_dom"/>
</dbReference>
<dbReference type="InterPro" id="IPR006367">
    <property type="entry name" value="Sirohaem_synthase_N"/>
</dbReference>
<dbReference type="InterPro" id="IPR003043">
    <property type="entry name" value="Uropor_MeTrfase_CS"/>
</dbReference>
<dbReference type="NCBIfam" id="TIGR01469">
    <property type="entry name" value="cobA_cysG_Cterm"/>
    <property type="match status" value="1"/>
</dbReference>
<dbReference type="NCBIfam" id="TIGR01470">
    <property type="entry name" value="cysG_Nterm"/>
    <property type="match status" value="1"/>
</dbReference>
<dbReference type="NCBIfam" id="NF004790">
    <property type="entry name" value="PRK06136.1"/>
    <property type="match status" value="1"/>
</dbReference>
<dbReference type="NCBIfam" id="NF007922">
    <property type="entry name" value="PRK10637.1"/>
    <property type="match status" value="1"/>
</dbReference>
<dbReference type="PANTHER" id="PTHR45790:SF1">
    <property type="entry name" value="SIROHEME SYNTHASE"/>
    <property type="match status" value="1"/>
</dbReference>
<dbReference type="PANTHER" id="PTHR45790">
    <property type="entry name" value="SIROHEME SYNTHASE-RELATED"/>
    <property type="match status" value="1"/>
</dbReference>
<dbReference type="Pfam" id="PF10414">
    <property type="entry name" value="CysG_dimeriser"/>
    <property type="match status" value="1"/>
</dbReference>
<dbReference type="Pfam" id="PF13241">
    <property type="entry name" value="NAD_binding_7"/>
    <property type="match status" value="1"/>
</dbReference>
<dbReference type="Pfam" id="PF14824">
    <property type="entry name" value="Sirohm_synth_M"/>
    <property type="match status" value="1"/>
</dbReference>
<dbReference type="Pfam" id="PF00590">
    <property type="entry name" value="TP_methylase"/>
    <property type="match status" value="1"/>
</dbReference>
<dbReference type="PIRSF" id="PIRSF036426">
    <property type="entry name" value="Sirohaem_synth"/>
    <property type="match status" value="1"/>
</dbReference>
<dbReference type="SUPFAM" id="SSF51735">
    <property type="entry name" value="NAD(P)-binding Rossmann-fold domains"/>
    <property type="match status" value="1"/>
</dbReference>
<dbReference type="SUPFAM" id="SSF75615">
    <property type="entry name" value="Siroheme synthase middle domains-like"/>
    <property type="match status" value="1"/>
</dbReference>
<dbReference type="SUPFAM" id="SSF53790">
    <property type="entry name" value="Tetrapyrrole methylase"/>
    <property type="match status" value="1"/>
</dbReference>
<dbReference type="PROSITE" id="PS00839">
    <property type="entry name" value="SUMT_1"/>
    <property type="match status" value="1"/>
</dbReference>
<dbReference type="PROSITE" id="PS00840">
    <property type="entry name" value="SUMT_2"/>
    <property type="match status" value="1"/>
</dbReference>
<reference key="1">
    <citation type="journal article" date="2009" name="PLoS Genet.">
        <title>Organised genome dynamics in the Escherichia coli species results in highly diverse adaptive paths.</title>
        <authorList>
            <person name="Touchon M."/>
            <person name="Hoede C."/>
            <person name="Tenaillon O."/>
            <person name="Barbe V."/>
            <person name="Baeriswyl S."/>
            <person name="Bidet P."/>
            <person name="Bingen E."/>
            <person name="Bonacorsi S."/>
            <person name="Bouchier C."/>
            <person name="Bouvet O."/>
            <person name="Calteau A."/>
            <person name="Chiapello H."/>
            <person name="Clermont O."/>
            <person name="Cruveiller S."/>
            <person name="Danchin A."/>
            <person name="Diard M."/>
            <person name="Dossat C."/>
            <person name="Karoui M.E."/>
            <person name="Frapy E."/>
            <person name="Garry L."/>
            <person name="Ghigo J.M."/>
            <person name="Gilles A.M."/>
            <person name="Johnson J."/>
            <person name="Le Bouguenec C."/>
            <person name="Lescat M."/>
            <person name="Mangenot S."/>
            <person name="Martinez-Jehanne V."/>
            <person name="Matic I."/>
            <person name="Nassif X."/>
            <person name="Oztas S."/>
            <person name="Petit M.A."/>
            <person name="Pichon C."/>
            <person name="Rouy Z."/>
            <person name="Ruf C.S."/>
            <person name="Schneider D."/>
            <person name="Tourret J."/>
            <person name="Vacherie B."/>
            <person name="Vallenet D."/>
            <person name="Medigue C."/>
            <person name="Rocha E.P.C."/>
            <person name="Denamur E."/>
        </authorList>
    </citation>
    <scope>NUCLEOTIDE SEQUENCE [LARGE SCALE GENOMIC DNA]</scope>
    <source>
        <strain>UMN026 / ExPEC</strain>
    </source>
</reference>
<gene>
    <name evidence="1" type="primary">cysG</name>
    <name type="ordered locus">ECUMN_3831</name>
</gene>
<comment type="function">
    <text evidence="1">Multifunctional enzyme that catalyzes the SAM-dependent methylations of uroporphyrinogen III at position C-2 and C-7 to form precorrin-2 via precorrin-1. Then it catalyzes the NAD-dependent ring dehydrogenation of precorrin-2 to yield sirohydrochlorin. Finally, it catalyzes the ferrochelation of sirohydrochlorin to yield siroheme.</text>
</comment>
<comment type="catalytic activity">
    <reaction evidence="1">
        <text>uroporphyrinogen III + 2 S-adenosyl-L-methionine = precorrin-2 + 2 S-adenosyl-L-homocysteine + H(+)</text>
        <dbReference type="Rhea" id="RHEA:32459"/>
        <dbReference type="ChEBI" id="CHEBI:15378"/>
        <dbReference type="ChEBI" id="CHEBI:57308"/>
        <dbReference type="ChEBI" id="CHEBI:57856"/>
        <dbReference type="ChEBI" id="CHEBI:58827"/>
        <dbReference type="ChEBI" id="CHEBI:59789"/>
        <dbReference type="EC" id="2.1.1.107"/>
    </reaction>
</comment>
<comment type="catalytic activity">
    <reaction evidence="1">
        <text>precorrin-2 + NAD(+) = sirohydrochlorin + NADH + 2 H(+)</text>
        <dbReference type="Rhea" id="RHEA:15613"/>
        <dbReference type="ChEBI" id="CHEBI:15378"/>
        <dbReference type="ChEBI" id="CHEBI:57540"/>
        <dbReference type="ChEBI" id="CHEBI:57945"/>
        <dbReference type="ChEBI" id="CHEBI:58351"/>
        <dbReference type="ChEBI" id="CHEBI:58827"/>
        <dbReference type="EC" id="1.3.1.76"/>
    </reaction>
</comment>
<comment type="catalytic activity">
    <reaction evidence="1">
        <text>siroheme + 2 H(+) = sirohydrochlorin + Fe(2+)</text>
        <dbReference type="Rhea" id="RHEA:24360"/>
        <dbReference type="ChEBI" id="CHEBI:15378"/>
        <dbReference type="ChEBI" id="CHEBI:29033"/>
        <dbReference type="ChEBI" id="CHEBI:58351"/>
        <dbReference type="ChEBI" id="CHEBI:60052"/>
        <dbReference type="EC" id="4.99.1.4"/>
    </reaction>
</comment>
<comment type="pathway">
    <text evidence="1">Cofactor biosynthesis; adenosylcobalamin biosynthesis; precorrin-2 from uroporphyrinogen III: step 1/1.</text>
</comment>
<comment type="pathway">
    <text evidence="1">Cofactor biosynthesis; adenosylcobalamin biosynthesis; sirohydrochlorin from precorrin-2: step 1/1.</text>
</comment>
<comment type="pathway">
    <text evidence="1">Porphyrin-containing compound metabolism; siroheme biosynthesis; precorrin-2 from uroporphyrinogen III: step 1/1.</text>
</comment>
<comment type="pathway">
    <text evidence="1">Porphyrin-containing compound metabolism; siroheme biosynthesis; siroheme from sirohydrochlorin: step 1/1.</text>
</comment>
<comment type="pathway">
    <text evidence="1">Porphyrin-containing compound metabolism; siroheme biosynthesis; sirohydrochlorin from precorrin-2: step 1/1.</text>
</comment>
<comment type="similarity">
    <text evidence="1">In the N-terminal section; belongs to the precorrin-2 dehydrogenase / sirohydrochlorin ferrochelatase family.</text>
</comment>
<comment type="similarity">
    <text evidence="1">In the C-terminal section; belongs to the precorrin methyltransferase family.</text>
</comment>
<organism>
    <name type="scientific">Escherichia coli O17:K52:H18 (strain UMN026 / ExPEC)</name>
    <dbReference type="NCBI Taxonomy" id="585056"/>
    <lineage>
        <taxon>Bacteria</taxon>
        <taxon>Pseudomonadati</taxon>
        <taxon>Pseudomonadota</taxon>
        <taxon>Gammaproteobacteria</taxon>
        <taxon>Enterobacterales</taxon>
        <taxon>Enterobacteriaceae</taxon>
        <taxon>Escherichia</taxon>
    </lineage>
</organism>
<proteinExistence type="inferred from homology"/>
<feature type="chain" id="PRO_1000186944" description="Siroheme synthase">
    <location>
        <begin position="1"/>
        <end position="457"/>
    </location>
</feature>
<feature type="region of interest" description="Precorrin-2 dehydrogenase /sirohydrochlorin ferrochelatase" evidence="1">
    <location>
        <begin position="1"/>
        <end position="204"/>
    </location>
</feature>
<feature type="region of interest" description="Uroporphyrinogen-III C-methyltransferase" evidence="1">
    <location>
        <begin position="216"/>
        <end position="457"/>
    </location>
</feature>
<feature type="active site" description="Proton acceptor" evidence="1">
    <location>
        <position position="248"/>
    </location>
</feature>
<feature type="active site" description="Proton donor" evidence="1">
    <location>
        <position position="270"/>
    </location>
</feature>
<feature type="binding site" evidence="1">
    <location>
        <begin position="22"/>
        <end position="23"/>
    </location>
    <ligand>
        <name>NAD(+)</name>
        <dbReference type="ChEBI" id="CHEBI:57540"/>
    </ligand>
</feature>
<feature type="binding site" evidence="1">
    <location>
        <begin position="43"/>
        <end position="44"/>
    </location>
    <ligand>
        <name>NAD(+)</name>
        <dbReference type="ChEBI" id="CHEBI:57540"/>
    </ligand>
</feature>
<feature type="binding site" evidence="1">
    <location>
        <position position="225"/>
    </location>
    <ligand>
        <name>S-adenosyl-L-methionine</name>
        <dbReference type="ChEBI" id="CHEBI:59789"/>
    </ligand>
</feature>
<feature type="binding site" evidence="1">
    <location>
        <begin position="301"/>
        <end position="303"/>
    </location>
    <ligand>
        <name>S-adenosyl-L-methionine</name>
        <dbReference type="ChEBI" id="CHEBI:59789"/>
    </ligand>
</feature>
<feature type="binding site" evidence="1">
    <location>
        <position position="306"/>
    </location>
    <ligand>
        <name>S-adenosyl-L-methionine</name>
        <dbReference type="ChEBI" id="CHEBI:59789"/>
    </ligand>
</feature>
<feature type="binding site" evidence="1">
    <location>
        <begin position="331"/>
        <end position="332"/>
    </location>
    <ligand>
        <name>S-adenosyl-L-methionine</name>
        <dbReference type="ChEBI" id="CHEBI:59789"/>
    </ligand>
</feature>
<feature type="binding site" evidence="1">
    <location>
        <position position="382"/>
    </location>
    <ligand>
        <name>S-adenosyl-L-methionine</name>
        <dbReference type="ChEBI" id="CHEBI:59789"/>
    </ligand>
</feature>
<feature type="binding site" evidence="1">
    <location>
        <position position="411"/>
    </location>
    <ligand>
        <name>S-adenosyl-L-methionine</name>
        <dbReference type="ChEBI" id="CHEBI:59789"/>
    </ligand>
</feature>
<feature type="modified residue" description="Phosphoserine" evidence="1">
    <location>
        <position position="128"/>
    </location>
</feature>
<evidence type="ECO:0000255" key="1">
    <source>
        <dbReference type="HAMAP-Rule" id="MF_01646"/>
    </source>
</evidence>